<evidence type="ECO:0000255" key="1">
    <source>
        <dbReference type="HAMAP-Rule" id="MF_00739"/>
    </source>
</evidence>
<proteinExistence type="inferred from homology"/>
<reference key="1">
    <citation type="submission" date="2003-08" db="EMBL/GenBank/DDBJ databases">
        <title>Yersinia intermedia urease gene locus (ureABCEFGD), urea transporter gene (yut) and nickel transporter gene (ureH).</title>
        <authorList>
            <person name="Sebbane F."/>
            <person name="Lemaitre N."/>
            <person name="Simonet M."/>
        </authorList>
    </citation>
    <scope>NUCLEOTIDE SEQUENCE [GENOMIC DNA]</scope>
</reference>
<accession>Q6UR62</accession>
<organism>
    <name type="scientific">Yersinia intermedia</name>
    <dbReference type="NCBI Taxonomy" id="631"/>
    <lineage>
        <taxon>Bacteria</taxon>
        <taxon>Pseudomonadati</taxon>
        <taxon>Pseudomonadota</taxon>
        <taxon>Gammaproteobacteria</taxon>
        <taxon>Enterobacterales</taxon>
        <taxon>Yersiniaceae</taxon>
        <taxon>Yersinia</taxon>
    </lineage>
</organism>
<comment type="catalytic activity">
    <reaction evidence="1">
        <text>urea + 2 H2O + H(+) = hydrogencarbonate + 2 NH4(+)</text>
        <dbReference type="Rhea" id="RHEA:20557"/>
        <dbReference type="ChEBI" id="CHEBI:15377"/>
        <dbReference type="ChEBI" id="CHEBI:15378"/>
        <dbReference type="ChEBI" id="CHEBI:16199"/>
        <dbReference type="ChEBI" id="CHEBI:17544"/>
        <dbReference type="ChEBI" id="CHEBI:28938"/>
        <dbReference type="EC" id="3.5.1.5"/>
    </reaction>
</comment>
<comment type="pathway">
    <text evidence="1">Nitrogen metabolism; urea degradation; CO(2) and NH(3) from urea (urease route): step 1/1.</text>
</comment>
<comment type="subunit">
    <text evidence="1">Heterotrimer of UreA (gamma), UreB (beta) and UreC (alpha) subunits. Three heterotrimers associate to form the active enzyme.</text>
</comment>
<comment type="subcellular location">
    <subcellularLocation>
        <location evidence="1">Cytoplasm</location>
    </subcellularLocation>
</comment>
<comment type="similarity">
    <text evidence="1">Belongs to the urease gamma subunit family.</text>
</comment>
<feature type="chain" id="PRO_0000098063" description="Urease subunit gamma">
    <location>
        <begin position="1"/>
        <end position="100"/>
    </location>
</feature>
<sequence length="100" mass="11049">MQLTPREVEKLMIYTLSDVAFKRKARGLKLNYPEAVSIITVTAMEGARDGKSVEDVMKEASKVLTKDDVMDGVADLIPNVQVEAIFTDGSRLVTVHDPIK</sequence>
<name>URE3_YERIN</name>
<keyword id="KW-0963">Cytoplasm</keyword>
<keyword id="KW-0378">Hydrolase</keyword>
<dbReference type="EC" id="3.5.1.5" evidence="1"/>
<dbReference type="EMBL" id="AY363683">
    <property type="protein sequence ID" value="AAR15108.1"/>
    <property type="molecule type" value="Genomic_DNA"/>
</dbReference>
<dbReference type="RefSeq" id="WP_002215288.1">
    <property type="nucleotide sequence ID" value="NZ_NHOI01000001.1"/>
</dbReference>
<dbReference type="SMR" id="Q6UR62"/>
<dbReference type="STRING" id="631.CH53_731"/>
<dbReference type="eggNOG" id="COG0831">
    <property type="taxonomic scope" value="Bacteria"/>
</dbReference>
<dbReference type="OrthoDB" id="9797217at2"/>
<dbReference type="UniPathway" id="UPA00258">
    <property type="reaction ID" value="UER00370"/>
</dbReference>
<dbReference type="GO" id="GO:0005737">
    <property type="term" value="C:cytoplasm"/>
    <property type="evidence" value="ECO:0007669"/>
    <property type="project" value="UniProtKB-SubCell"/>
</dbReference>
<dbReference type="GO" id="GO:0016151">
    <property type="term" value="F:nickel cation binding"/>
    <property type="evidence" value="ECO:0007669"/>
    <property type="project" value="InterPro"/>
</dbReference>
<dbReference type="GO" id="GO:0009039">
    <property type="term" value="F:urease activity"/>
    <property type="evidence" value="ECO:0007669"/>
    <property type="project" value="UniProtKB-UniRule"/>
</dbReference>
<dbReference type="GO" id="GO:0043419">
    <property type="term" value="P:urea catabolic process"/>
    <property type="evidence" value="ECO:0007669"/>
    <property type="project" value="UniProtKB-UniRule"/>
</dbReference>
<dbReference type="CDD" id="cd00390">
    <property type="entry name" value="Urease_gamma"/>
    <property type="match status" value="1"/>
</dbReference>
<dbReference type="Gene3D" id="3.30.280.10">
    <property type="entry name" value="Urease, gamma-like subunit"/>
    <property type="match status" value="1"/>
</dbReference>
<dbReference type="HAMAP" id="MF_00739">
    <property type="entry name" value="Urease_gamma"/>
    <property type="match status" value="1"/>
</dbReference>
<dbReference type="InterPro" id="IPR012010">
    <property type="entry name" value="Urease_gamma"/>
</dbReference>
<dbReference type="InterPro" id="IPR002026">
    <property type="entry name" value="Urease_gamma/gamma-beta_su"/>
</dbReference>
<dbReference type="InterPro" id="IPR036463">
    <property type="entry name" value="Urease_gamma_sf"/>
</dbReference>
<dbReference type="InterPro" id="IPR050069">
    <property type="entry name" value="Urease_subunit"/>
</dbReference>
<dbReference type="NCBIfam" id="NF009712">
    <property type="entry name" value="PRK13241.1"/>
    <property type="match status" value="1"/>
</dbReference>
<dbReference type="NCBIfam" id="TIGR00193">
    <property type="entry name" value="urease_gam"/>
    <property type="match status" value="1"/>
</dbReference>
<dbReference type="PANTHER" id="PTHR33569">
    <property type="entry name" value="UREASE"/>
    <property type="match status" value="1"/>
</dbReference>
<dbReference type="PANTHER" id="PTHR33569:SF1">
    <property type="entry name" value="UREASE"/>
    <property type="match status" value="1"/>
</dbReference>
<dbReference type="Pfam" id="PF00547">
    <property type="entry name" value="Urease_gamma"/>
    <property type="match status" value="1"/>
</dbReference>
<dbReference type="PIRSF" id="PIRSF001223">
    <property type="entry name" value="Urease_gamma"/>
    <property type="match status" value="1"/>
</dbReference>
<dbReference type="SUPFAM" id="SSF54111">
    <property type="entry name" value="Urease, gamma-subunit"/>
    <property type="match status" value="1"/>
</dbReference>
<gene>
    <name evidence="1" type="primary">ureA</name>
</gene>
<protein>
    <recommendedName>
        <fullName evidence="1">Urease subunit gamma</fullName>
        <ecNumber evidence="1">3.5.1.5</ecNumber>
    </recommendedName>
    <alternativeName>
        <fullName evidence="1">Urea amidohydrolase subunit gamma</fullName>
    </alternativeName>
</protein>